<name>ATPF_STRA5</name>
<evidence type="ECO:0000255" key="1">
    <source>
        <dbReference type="HAMAP-Rule" id="MF_01398"/>
    </source>
</evidence>
<sequence>MSILINSTTIGDIIIVSGSVLLLFILIKTFAWKQITGIFEAREQKIANDIDTAEQARQQAEAFATKREEELSNAKTEANQIIDNAKETGLAKGDQIISEAKTEADRLKEKAHQDIAQNKAEALADVKGEVADLTVLLAEKIMVSNLDKEAQSNLIDSYIKKLGDA</sequence>
<proteinExistence type="inferred from homology"/>
<dbReference type="EMBL" id="AE009948">
    <property type="protein sequence ID" value="AAM99745.1"/>
    <property type="molecule type" value="Genomic_DNA"/>
</dbReference>
<dbReference type="RefSeq" id="NP_687873.1">
    <property type="nucleotide sequence ID" value="NC_004116.1"/>
</dbReference>
<dbReference type="RefSeq" id="WP_000025478.1">
    <property type="nucleotide sequence ID" value="NC_004116.1"/>
</dbReference>
<dbReference type="SMR" id="Q8E076"/>
<dbReference type="STRING" id="208435.SAG0859"/>
<dbReference type="GeneID" id="66885809"/>
<dbReference type="KEGG" id="sag:SAG0859"/>
<dbReference type="PATRIC" id="fig|208435.3.peg.866"/>
<dbReference type="HOGENOM" id="CLU_079215_4_2_9"/>
<dbReference type="OrthoDB" id="282095at2"/>
<dbReference type="Proteomes" id="UP000000821">
    <property type="component" value="Chromosome"/>
</dbReference>
<dbReference type="GO" id="GO:0005886">
    <property type="term" value="C:plasma membrane"/>
    <property type="evidence" value="ECO:0007669"/>
    <property type="project" value="UniProtKB-SubCell"/>
</dbReference>
<dbReference type="GO" id="GO:0045259">
    <property type="term" value="C:proton-transporting ATP synthase complex"/>
    <property type="evidence" value="ECO:0007669"/>
    <property type="project" value="UniProtKB-KW"/>
</dbReference>
<dbReference type="GO" id="GO:0046933">
    <property type="term" value="F:proton-transporting ATP synthase activity, rotational mechanism"/>
    <property type="evidence" value="ECO:0007669"/>
    <property type="project" value="UniProtKB-UniRule"/>
</dbReference>
<dbReference type="GO" id="GO:0046961">
    <property type="term" value="F:proton-transporting ATPase activity, rotational mechanism"/>
    <property type="evidence" value="ECO:0007669"/>
    <property type="project" value="TreeGrafter"/>
</dbReference>
<dbReference type="CDD" id="cd06503">
    <property type="entry name" value="ATP-synt_Fo_b"/>
    <property type="match status" value="1"/>
</dbReference>
<dbReference type="Gene3D" id="6.10.250.1580">
    <property type="match status" value="1"/>
</dbReference>
<dbReference type="HAMAP" id="MF_01398">
    <property type="entry name" value="ATP_synth_b_bprime"/>
    <property type="match status" value="1"/>
</dbReference>
<dbReference type="InterPro" id="IPR028987">
    <property type="entry name" value="ATP_synth_B-like_membr_sf"/>
</dbReference>
<dbReference type="InterPro" id="IPR002146">
    <property type="entry name" value="ATP_synth_b/b'su_bac/chlpt"/>
</dbReference>
<dbReference type="InterPro" id="IPR005864">
    <property type="entry name" value="ATP_synth_F0_bsu_bac"/>
</dbReference>
<dbReference type="InterPro" id="IPR050059">
    <property type="entry name" value="ATP_synthase_B_chain"/>
</dbReference>
<dbReference type="NCBIfam" id="TIGR01144">
    <property type="entry name" value="ATP_synt_b"/>
    <property type="match status" value="1"/>
</dbReference>
<dbReference type="PANTHER" id="PTHR33445:SF1">
    <property type="entry name" value="ATP SYNTHASE SUBUNIT B"/>
    <property type="match status" value="1"/>
</dbReference>
<dbReference type="PANTHER" id="PTHR33445">
    <property type="entry name" value="ATP SYNTHASE SUBUNIT B', CHLOROPLASTIC"/>
    <property type="match status" value="1"/>
</dbReference>
<dbReference type="Pfam" id="PF00430">
    <property type="entry name" value="ATP-synt_B"/>
    <property type="match status" value="1"/>
</dbReference>
<dbReference type="SUPFAM" id="SSF81573">
    <property type="entry name" value="F1F0 ATP synthase subunit B, membrane domain"/>
    <property type="match status" value="1"/>
</dbReference>
<gene>
    <name evidence="1" type="primary">atpF</name>
    <name type="ordered locus">SAG0859</name>
</gene>
<reference key="1">
    <citation type="journal article" date="2002" name="Proc. Natl. Acad. Sci. U.S.A.">
        <title>Complete genome sequence and comparative genomic analysis of an emerging human pathogen, serotype V Streptococcus agalactiae.</title>
        <authorList>
            <person name="Tettelin H."/>
            <person name="Masignani V."/>
            <person name="Cieslewicz M.J."/>
            <person name="Eisen J.A."/>
            <person name="Peterson S.N."/>
            <person name="Wessels M.R."/>
            <person name="Paulsen I.T."/>
            <person name="Nelson K.E."/>
            <person name="Margarit I."/>
            <person name="Read T.D."/>
            <person name="Madoff L.C."/>
            <person name="Wolf A.M."/>
            <person name="Beanan M.J."/>
            <person name="Brinkac L.M."/>
            <person name="Daugherty S.C."/>
            <person name="DeBoy R.T."/>
            <person name="Durkin A.S."/>
            <person name="Kolonay J.F."/>
            <person name="Madupu R."/>
            <person name="Lewis M.R."/>
            <person name="Radune D."/>
            <person name="Fedorova N.B."/>
            <person name="Scanlan D."/>
            <person name="Khouri H.M."/>
            <person name="Mulligan S."/>
            <person name="Carty H.A."/>
            <person name="Cline R.T."/>
            <person name="Van Aken S.E."/>
            <person name="Gill J."/>
            <person name="Scarselli M."/>
            <person name="Mora M."/>
            <person name="Iacobini E.T."/>
            <person name="Brettoni C."/>
            <person name="Galli G."/>
            <person name="Mariani M."/>
            <person name="Vegni F."/>
            <person name="Maione D."/>
            <person name="Rinaudo D."/>
            <person name="Rappuoli R."/>
            <person name="Telford J.L."/>
            <person name="Kasper D.L."/>
            <person name="Grandi G."/>
            <person name="Fraser C.M."/>
        </authorList>
    </citation>
    <scope>NUCLEOTIDE SEQUENCE [LARGE SCALE GENOMIC DNA]</scope>
    <source>
        <strain>ATCC BAA-611 / 2603 V/R</strain>
    </source>
</reference>
<feature type="chain" id="PRO_0000368794" description="ATP synthase subunit b">
    <location>
        <begin position="1"/>
        <end position="165"/>
    </location>
</feature>
<feature type="transmembrane region" description="Helical" evidence="1">
    <location>
        <begin position="7"/>
        <end position="27"/>
    </location>
</feature>
<organism>
    <name type="scientific">Streptococcus agalactiae serotype V (strain ATCC BAA-611 / 2603 V/R)</name>
    <dbReference type="NCBI Taxonomy" id="208435"/>
    <lineage>
        <taxon>Bacteria</taxon>
        <taxon>Bacillati</taxon>
        <taxon>Bacillota</taxon>
        <taxon>Bacilli</taxon>
        <taxon>Lactobacillales</taxon>
        <taxon>Streptococcaceae</taxon>
        <taxon>Streptococcus</taxon>
    </lineage>
</organism>
<keyword id="KW-0066">ATP synthesis</keyword>
<keyword id="KW-1003">Cell membrane</keyword>
<keyword id="KW-0138">CF(0)</keyword>
<keyword id="KW-0375">Hydrogen ion transport</keyword>
<keyword id="KW-0406">Ion transport</keyword>
<keyword id="KW-0472">Membrane</keyword>
<keyword id="KW-1185">Reference proteome</keyword>
<keyword id="KW-0812">Transmembrane</keyword>
<keyword id="KW-1133">Transmembrane helix</keyword>
<keyword id="KW-0813">Transport</keyword>
<accession>Q8E076</accession>
<protein>
    <recommendedName>
        <fullName evidence="1">ATP synthase subunit b</fullName>
    </recommendedName>
    <alternativeName>
        <fullName evidence="1">ATP synthase F(0) sector subunit b</fullName>
    </alternativeName>
    <alternativeName>
        <fullName evidence="1">ATPase subunit I</fullName>
    </alternativeName>
    <alternativeName>
        <fullName evidence="1">F-type ATPase subunit b</fullName>
        <shortName evidence="1">F-ATPase subunit b</shortName>
    </alternativeName>
</protein>
<comment type="function">
    <text evidence="1">F(1)F(0) ATP synthase produces ATP from ADP in the presence of a proton or sodium gradient. F-type ATPases consist of two structural domains, F(1) containing the extramembraneous catalytic core and F(0) containing the membrane proton channel, linked together by a central stalk and a peripheral stalk. During catalysis, ATP synthesis in the catalytic domain of F(1) is coupled via a rotary mechanism of the central stalk subunits to proton translocation.</text>
</comment>
<comment type="function">
    <text evidence="1">Component of the F(0) channel, it forms part of the peripheral stalk, linking F(1) to F(0).</text>
</comment>
<comment type="subunit">
    <text evidence="1">F-type ATPases have 2 components, F(1) - the catalytic core - and F(0) - the membrane proton channel. F(1) has five subunits: alpha(3), beta(3), gamma(1), delta(1), epsilon(1). F(0) has three main subunits: a(1), b(2) and c(10-14). The alpha and beta chains form an alternating ring which encloses part of the gamma chain. F(1) is attached to F(0) by a central stalk formed by the gamma and epsilon chains, while a peripheral stalk is formed by the delta and b chains.</text>
</comment>
<comment type="subcellular location">
    <subcellularLocation>
        <location evidence="1">Cell membrane</location>
        <topology evidence="1">Single-pass membrane protein</topology>
    </subcellularLocation>
</comment>
<comment type="similarity">
    <text evidence="1">Belongs to the ATPase B chain family.</text>
</comment>